<name>OR6A2_HUMAN</name>
<gene>
    <name type="primary">OR6A2</name>
    <name type="synonym">OR6A1</name>
    <name type="synonym">OR6A2P</name>
</gene>
<keyword id="KW-1003">Cell membrane</keyword>
<keyword id="KW-1015">Disulfide bond</keyword>
<keyword id="KW-0297">G-protein coupled receptor</keyword>
<keyword id="KW-0325">Glycoprotein</keyword>
<keyword id="KW-0472">Membrane</keyword>
<keyword id="KW-0552">Olfaction</keyword>
<keyword id="KW-0675">Receptor</keyword>
<keyword id="KW-1185">Reference proteome</keyword>
<keyword id="KW-0716">Sensory transduction</keyword>
<keyword id="KW-0807">Transducer</keyword>
<keyword id="KW-0812">Transmembrane</keyword>
<keyword id="KW-1133">Transmembrane helix</keyword>
<feature type="chain" id="PRO_0000150619" description="Olfactory receptor 6A2">
    <location>
        <begin position="1"/>
        <end position="327"/>
    </location>
</feature>
<feature type="topological domain" description="Extracellular" evidence="1">
    <location>
        <begin position="1"/>
        <end position="26"/>
    </location>
</feature>
<feature type="transmembrane region" description="Helical; Name=1" evidence="1">
    <location>
        <begin position="27"/>
        <end position="47"/>
    </location>
</feature>
<feature type="topological domain" description="Cytoplasmic" evidence="1">
    <location>
        <begin position="48"/>
        <end position="55"/>
    </location>
</feature>
<feature type="transmembrane region" description="Helical; Name=2" evidence="1">
    <location>
        <begin position="56"/>
        <end position="76"/>
    </location>
</feature>
<feature type="topological domain" description="Extracellular" evidence="1">
    <location>
        <begin position="77"/>
        <end position="104"/>
    </location>
</feature>
<feature type="transmembrane region" description="Helical; Name=3" evidence="1">
    <location>
        <begin position="105"/>
        <end position="125"/>
    </location>
</feature>
<feature type="topological domain" description="Cytoplasmic" evidence="1">
    <location>
        <begin position="126"/>
        <end position="144"/>
    </location>
</feature>
<feature type="transmembrane region" description="Helical; Name=4" evidence="1">
    <location>
        <begin position="145"/>
        <end position="165"/>
    </location>
</feature>
<feature type="topological domain" description="Extracellular" evidence="1">
    <location>
        <begin position="166"/>
        <end position="201"/>
    </location>
</feature>
<feature type="transmembrane region" description="Helical; Name=5" evidence="1">
    <location>
        <begin position="202"/>
        <end position="222"/>
    </location>
</feature>
<feature type="topological domain" description="Cytoplasmic" evidence="1">
    <location>
        <begin position="223"/>
        <end position="242"/>
    </location>
</feature>
<feature type="transmembrane region" description="Helical; Name=6" evidence="1">
    <location>
        <begin position="243"/>
        <end position="263"/>
    </location>
</feature>
<feature type="topological domain" description="Extracellular" evidence="1">
    <location>
        <begin position="264"/>
        <end position="276"/>
    </location>
</feature>
<feature type="transmembrane region" description="Helical; Name=7" evidence="1">
    <location>
        <begin position="277"/>
        <end position="297"/>
    </location>
</feature>
<feature type="topological domain" description="Cytoplasmic" evidence="1">
    <location>
        <begin position="298"/>
        <end position="327"/>
    </location>
</feature>
<feature type="glycosylation site" description="N-linked (GlcNAc...) asparagine" evidence="1">
    <location>
        <position position="5"/>
    </location>
</feature>
<feature type="glycosylation site" description="N-linked (GlcNAc...) asparagine" evidence="1">
    <location>
        <position position="191"/>
    </location>
</feature>
<feature type="disulfide bond" evidence="2">
    <location>
        <begin position="102"/>
        <end position="194"/>
    </location>
</feature>
<feature type="sequence variant" id="VAR_053217" description="In dbSNP:rs7122644.">
    <original>A</original>
    <variation>V</variation>
    <location>
        <position position="22"/>
    </location>
</feature>
<feature type="sequence conflict" description="In Ref. 1; AAC70018." evidence="3" ref="1">
    <original>APLQVL</original>
    <variation>VPIQVI</variation>
    <location>
        <begin position="22"/>
        <end position="27"/>
    </location>
</feature>
<feature type="sequence conflict" description="In Ref. 1; AAC70018/DAA04825." evidence="3" ref="1">
    <original>Y</original>
    <variation>N</variation>
    <location>
        <position position="125"/>
    </location>
</feature>
<feature type="sequence conflict" description="In Ref. 1; AAC70018/DAA04825." evidence="3" ref="1">
    <original>P</original>
    <variation>L</variation>
    <location>
        <position position="134"/>
    </location>
</feature>
<feature type="sequence conflict" description="In Ref. 1; AAC70018/DAA04825." evidence="3" ref="1">
    <original>Y</original>
    <variation>N</variation>
    <location>
        <position position="137"/>
    </location>
</feature>
<feature type="sequence conflict" description="In Ref. 1; AAC70018/DAA04825." evidence="3" ref="1">
    <original>YC</original>
    <variation>NG</variation>
    <location>
        <begin position="173"/>
        <end position="174"/>
    </location>
</feature>
<feature type="sequence conflict" description="In Ref. 1; AAC70018/DAA04825." evidence="3" ref="1">
    <original>LT</original>
    <variation>FN</variation>
    <location>
        <begin position="250"/>
        <end position="251"/>
    </location>
</feature>
<feature type="sequence conflict" description="In Ref. 1; AAC70018/DAA04825." evidence="3" ref="1">
    <original>T</original>
    <variation>I</variation>
    <location>
        <position position="309"/>
    </location>
</feature>
<feature type="sequence conflict" description="In Ref. 1; AAC70018/DAA04825." evidence="3" ref="1">
    <original>A</original>
    <variation>G</variation>
    <location>
        <position position="323"/>
    </location>
</feature>
<accession>O95222</accession>
<accession>Q3MJC7</accession>
<accession>Q6IF35</accession>
<accession>Q9H206</accession>
<evidence type="ECO:0000255" key="1"/>
<evidence type="ECO:0000255" key="2">
    <source>
        <dbReference type="PROSITE-ProRule" id="PRU00521"/>
    </source>
</evidence>
<evidence type="ECO:0000305" key="3"/>
<dbReference type="EMBL" id="AF065870">
    <property type="protein sequence ID" value="AAC70018.1"/>
    <property type="molecule type" value="Genomic_DNA"/>
</dbReference>
<dbReference type="EMBL" id="AF321237">
    <property type="protein sequence ID" value="AAG45208.1"/>
    <property type="molecule type" value="Genomic_DNA"/>
</dbReference>
<dbReference type="EMBL" id="AB065822">
    <property type="protein sequence ID" value="BAC06041.1"/>
    <property type="molecule type" value="Genomic_DNA"/>
</dbReference>
<dbReference type="EMBL" id="BC101489">
    <property type="protein sequence ID" value="AAI01490.1"/>
    <property type="molecule type" value="mRNA"/>
</dbReference>
<dbReference type="EMBL" id="BC101491">
    <property type="protein sequence ID" value="AAI01492.1"/>
    <property type="molecule type" value="mRNA"/>
</dbReference>
<dbReference type="EMBL" id="BK004427">
    <property type="protein sequence ID" value="DAA04825.1"/>
    <property type="molecule type" value="Genomic_DNA"/>
</dbReference>
<dbReference type="CCDS" id="CCDS7772.1"/>
<dbReference type="RefSeq" id="NP_003687.2">
    <property type="nucleotide sequence ID" value="NM_003696.2"/>
</dbReference>
<dbReference type="SMR" id="O95222"/>
<dbReference type="BioGRID" id="114155">
    <property type="interactions" value="4"/>
</dbReference>
<dbReference type="FunCoup" id="O95222">
    <property type="interactions" value="480"/>
</dbReference>
<dbReference type="IntAct" id="O95222">
    <property type="interactions" value="1"/>
</dbReference>
<dbReference type="STRING" id="9606.ENSP00000492990"/>
<dbReference type="GlyCosmos" id="O95222">
    <property type="glycosylation" value="2 sites, No reported glycans"/>
</dbReference>
<dbReference type="GlyGen" id="O95222">
    <property type="glycosylation" value="3 sites, 1 O-linked glycan (1 site)"/>
</dbReference>
<dbReference type="BioMuta" id="OR6A2"/>
<dbReference type="PaxDb" id="9606-ENSP00000330384"/>
<dbReference type="Antibodypedia" id="54720">
    <property type="antibodies" value="40 antibodies from 15 providers"/>
</dbReference>
<dbReference type="DNASU" id="8590"/>
<dbReference type="Ensembl" id="ENST00000641196.1">
    <property type="protein sequence ID" value="ENSP00000492990.1"/>
    <property type="gene ID" value="ENSG00000184933.6"/>
</dbReference>
<dbReference type="GeneID" id="8590"/>
<dbReference type="KEGG" id="hsa:8590"/>
<dbReference type="MANE-Select" id="ENST00000641196.1">
    <property type="protein sequence ID" value="ENSP00000492990.1"/>
    <property type="RefSeq nucleotide sequence ID" value="NM_003696.3"/>
    <property type="RefSeq protein sequence ID" value="NP_003687.2"/>
</dbReference>
<dbReference type="UCSC" id="uc001mes.2">
    <property type="organism name" value="human"/>
</dbReference>
<dbReference type="AGR" id="HGNC:15301"/>
<dbReference type="CTD" id="8590"/>
<dbReference type="DisGeNET" id="8590"/>
<dbReference type="GeneCards" id="OR6A2"/>
<dbReference type="HGNC" id="HGNC:15301">
    <property type="gene designation" value="OR6A2"/>
</dbReference>
<dbReference type="HPA" id="ENSG00000184933">
    <property type="expression patterns" value="Not detected"/>
</dbReference>
<dbReference type="MIM" id="608495">
    <property type="type" value="gene"/>
</dbReference>
<dbReference type="neXtProt" id="NX_O95222"/>
<dbReference type="PharmGKB" id="PA32574"/>
<dbReference type="VEuPathDB" id="HostDB:ENSG00000184933"/>
<dbReference type="eggNOG" id="ENOG502QVH7">
    <property type="taxonomic scope" value="Eukaryota"/>
</dbReference>
<dbReference type="GeneTree" id="ENSGT01120000271873"/>
<dbReference type="HOGENOM" id="CLU_012526_1_0_1"/>
<dbReference type="InParanoid" id="O95222"/>
<dbReference type="OMA" id="MAIRNHP"/>
<dbReference type="OrthoDB" id="5967130at2759"/>
<dbReference type="PAN-GO" id="O95222">
    <property type="GO annotations" value="0 GO annotations based on evolutionary models"/>
</dbReference>
<dbReference type="PhylomeDB" id="O95222"/>
<dbReference type="TreeFam" id="TF337475"/>
<dbReference type="PathwayCommons" id="O95222"/>
<dbReference type="Reactome" id="R-HSA-9752946">
    <property type="pathway name" value="Expression and translocation of olfactory receptors"/>
</dbReference>
<dbReference type="BioGRID-ORCS" id="8590">
    <property type="hits" value="8 hits in 747 CRISPR screens"/>
</dbReference>
<dbReference type="GeneWiki" id="OR6A2"/>
<dbReference type="GenomeRNAi" id="8590"/>
<dbReference type="Pharos" id="O95222">
    <property type="development level" value="Tdark"/>
</dbReference>
<dbReference type="PRO" id="PR:O95222"/>
<dbReference type="Proteomes" id="UP000005640">
    <property type="component" value="Chromosome 11"/>
</dbReference>
<dbReference type="RNAct" id="O95222">
    <property type="molecule type" value="protein"/>
</dbReference>
<dbReference type="Bgee" id="ENSG00000184933">
    <property type="expression patterns" value="Expressed in male germ line stem cell (sensu Vertebrata) in testis"/>
</dbReference>
<dbReference type="ExpressionAtlas" id="O95222">
    <property type="expression patterns" value="baseline and differential"/>
</dbReference>
<dbReference type="GO" id="GO:0016020">
    <property type="term" value="C:membrane"/>
    <property type="evidence" value="ECO:0000303"/>
    <property type="project" value="UniProtKB"/>
</dbReference>
<dbReference type="GO" id="GO:0005886">
    <property type="term" value="C:plasma membrane"/>
    <property type="evidence" value="ECO:0000318"/>
    <property type="project" value="GO_Central"/>
</dbReference>
<dbReference type="GO" id="GO:0004930">
    <property type="term" value="F:G protein-coupled receptor activity"/>
    <property type="evidence" value="ECO:0007669"/>
    <property type="project" value="UniProtKB-KW"/>
</dbReference>
<dbReference type="GO" id="GO:0004984">
    <property type="term" value="F:olfactory receptor activity"/>
    <property type="evidence" value="ECO:0000318"/>
    <property type="project" value="GO_Central"/>
</dbReference>
<dbReference type="GO" id="GO:0050911">
    <property type="term" value="P:detection of chemical stimulus involved in sensory perception of smell"/>
    <property type="evidence" value="ECO:0000318"/>
    <property type="project" value="GO_Central"/>
</dbReference>
<dbReference type="GO" id="GO:0007608">
    <property type="term" value="P:sensory perception of smell"/>
    <property type="evidence" value="ECO:0000303"/>
    <property type="project" value="UniProtKB"/>
</dbReference>
<dbReference type="GO" id="GO:0007165">
    <property type="term" value="P:signal transduction"/>
    <property type="evidence" value="ECO:0000303"/>
    <property type="project" value="UniProtKB"/>
</dbReference>
<dbReference type="CDD" id="cd15224">
    <property type="entry name" value="7tmA_OR6B-like"/>
    <property type="match status" value="1"/>
</dbReference>
<dbReference type="FunFam" id="1.10.1220.70:FF:000001">
    <property type="entry name" value="Olfactory receptor"/>
    <property type="match status" value="1"/>
</dbReference>
<dbReference type="FunFam" id="1.20.1070.10:FF:000001">
    <property type="entry name" value="Olfactory receptor"/>
    <property type="match status" value="1"/>
</dbReference>
<dbReference type="Gene3D" id="1.20.1070.10">
    <property type="entry name" value="Rhodopsin 7-helix transmembrane proteins"/>
    <property type="match status" value="1"/>
</dbReference>
<dbReference type="InterPro" id="IPR000276">
    <property type="entry name" value="GPCR_Rhodpsn"/>
</dbReference>
<dbReference type="InterPro" id="IPR017452">
    <property type="entry name" value="GPCR_Rhodpsn_7TM"/>
</dbReference>
<dbReference type="InterPro" id="IPR000725">
    <property type="entry name" value="Olfact_rcpt"/>
</dbReference>
<dbReference type="InterPro" id="IPR050939">
    <property type="entry name" value="Olfactory_GPCR1"/>
</dbReference>
<dbReference type="PANTHER" id="PTHR24242">
    <property type="entry name" value="G-PROTEIN COUPLED RECEPTOR"/>
    <property type="match status" value="1"/>
</dbReference>
<dbReference type="PANTHER" id="PTHR24242:SF359">
    <property type="entry name" value="ODORANT RECEPTOR-RELATED"/>
    <property type="match status" value="1"/>
</dbReference>
<dbReference type="Pfam" id="PF13853">
    <property type="entry name" value="7tm_4"/>
    <property type="match status" value="1"/>
</dbReference>
<dbReference type="PRINTS" id="PR00237">
    <property type="entry name" value="GPCRRHODOPSN"/>
</dbReference>
<dbReference type="PRINTS" id="PR00245">
    <property type="entry name" value="OLFACTORYR"/>
</dbReference>
<dbReference type="SUPFAM" id="SSF81321">
    <property type="entry name" value="Family A G protein-coupled receptor-like"/>
    <property type="match status" value="1"/>
</dbReference>
<dbReference type="PROSITE" id="PS00237">
    <property type="entry name" value="G_PROTEIN_RECEP_F1_1"/>
    <property type="match status" value="1"/>
</dbReference>
<dbReference type="PROSITE" id="PS50262">
    <property type="entry name" value="G_PROTEIN_RECEP_F1_2"/>
    <property type="match status" value="1"/>
</dbReference>
<reference key="1">
    <citation type="journal article" date="1998" name="Genomics">
        <title>Organization and evolution of olfactory receptor genes on human chromosome 11.</title>
        <authorList>
            <person name="Buettner J.A."/>
            <person name="Glusman G."/>
            <person name="Ben-Arie N."/>
            <person name="Ramos P."/>
            <person name="Lancet D."/>
            <person name="Evans G.A."/>
        </authorList>
    </citation>
    <scope>NUCLEOTIDE SEQUENCE [GENOMIC DNA]</scope>
</reference>
<reference key="2">
    <citation type="journal article" date="2001" name="Proc. Natl. Acad. Sci. U.S.A.">
        <title>Genomic analysis of orthologous mouse and human olfactory receptor loci.</title>
        <authorList>
            <person name="Lane R.P."/>
            <person name="Cutforth T."/>
            <person name="Young J."/>
            <person name="Athanasiou M."/>
            <person name="Friedman C."/>
            <person name="Rowen L."/>
            <person name="Evans G."/>
            <person name="Axel R."/>
            <person name="Hood L."/>
            <person name="Trask B.J."/>
        </authorList>
    </citation>
    <scope>NUCLEOTIDE SEQUENCE [GENOMIC DNA]</scope>
</reference>
<reference key="3">
    <citation type="submission" date="2001-07" db="EMBL/GenBank/DDBJ databases">
        <title>Genome-wide discovery and analysis of human seven transmembrane helix receptor genes.</title>
        <authorList>
            <person name="Suwa M."/>
            <person name="Sato T."/>
            <person name="Okouchi I."/>
            <person name="Arita M."/>
            <person name="Futami K."/>
            <person name="Matsumoto S."/>
            <person name="Tsutsumi S."/>
            <person name="Aburatani H."/>
            <person name="Asai K."/>
            <person name="Akiyama Y."/>
        </authorList>
    </citation>
    <scope>NUCLEOTIDE SEQUENCE [GENOMIC DNA]</scope>
</reference>
<reference key="4">
    <citation type="journal article" date="2004" name="Genome Res.">
        <title>The status, quality, and expansion of the NIH full-length cDNA project: the Mammalian Gene Collection (MGC).</title>
        <authorList>
            <consortium name="The MGC Project Team"/>
        </authorList>
    </citation>
    <scope>NUCLEOTIDE SEQUENCE [LARGE SCALE MRNA]</scope>
    <source>
        <tissue>Brain</tissue>
    </source>
</reference>
<reference key="5">
    <citation type="journal article" date="2004" name="Proc. Natl. Acad. Sci. U.S.A.">
        <title>The human olfactory receptor gene family.</title>
        <authorList>
            <person name="Malnic B."/>
            <person name="Godfrey P.A."/>
            <person name="Buck L.B."/>
        </authorList>
    </citation>
    <scope>IDENTIFICATION</scope>
</reference>
<reference key="6">
    <citation type="journal article" date="2004" name="Proc. Natl. Acad. Sci. U.S.A.">
        <authorList>
            <person name="Malnic B."/>
            <person name="Godfrey P.A."/>
            <person name="Buck L.B."/>
        </authorList>
    </citation>
    <scope>ERRATUM OF PUBMED:14983052</scope>
</reference>
<proteinExistence type="evidence at transcript level"/>
<comment type="function">
    <text evidence="3">Odorant receptor.</text>
</comment>
<comment type="subcellular location">
    <subcellularLocation>
        <location>Cell membrane</location>
        <topology>Multi-pass membrane protein</topology>
    </subcellularLocation>
</comment>
<comment type="similarity">
    <text evidence="2">Belongs to the G-protein coupled receptor 1 family.</text>
</comment>
<comment type="online information" name="Human Olfactory Receptor Data Exploratorium (HORDE)">
    <link uri="http://genome.weizmann.ac.il/horde/card/index/symbol:OR6A1"/>
</comment>
<organism>
    <name type="scientific">Homo sapiens</name>
    <name type="common">Human</name>
    <dbReference type="NCBI Taxonomy" id="9606"/>
    <lineage>
        <taxon>Eukaryota</taxon>
        <taxon>Metazoa</taxon>
        <taxon>Chordata</taxon>
        <taxon>Craniata</taxon>
        <taxon>Vertebrata</taxon>
        <taxon>Euteleostomi</taxon>
        <taxon>Mammalia</taxon>
        <taxon>Eutheria</taxon>
        <taxon>Euarchontoglires</taxon>
        <taxon>Primates</taxon>
        <taxon>Haplorrhini</taxon>
        <taxon>Catarrhini</taxon>
        <taxon>Hominidae</taxon>
        <taxon>Homo</taxon>
    </lineage>
</organism>
<protein>
    <recommendedName>
        <fullName>Olfactory receptor 6A2</fullName>
    </recommendedName>
    <alternativeName>
        <fullName>Olfactory receptor 11-55</fullName>
        <shortName>OR11-55</shortName>
    </alternativeName>
    <alternativeName>
        <fullName>Olfactory receptor 6A1</fullName>
    </alternativeName>
    <alternativeName>
        <fullName>Olfactory receptor OR11-83</fullName>
    </alternativeName>
    <alternativeName>
        <fullName>hP2 olfactory receptor</fullName>
    </alternativeName>
</protein>
<sequence>MEWRNHSGRVSEFVLLGFPAPAPLQVLLFALLLLAYVLVLTENTLIIMAIRNHSTLHKPMYFFLANMSFLEIWYVTVTIPKMLAGFVGSKQDHGQLISFEGCMTQLYFFLGLGCTECVLLAVMAYDRYMAICYPLHYPVIVSGRLCVQMAAGSWAGGFGISMVKVFLISGLSYCGPNIINHFFCDVSPLLNLSCTDMSTAELTDFILAIFILLGPLSVTGASYVAITGAVMHIPSAAGRYKAFSTCASHLTVVIIFYAASIFIYARPKALSAFDTNKLVSVLYAVIVPLLNPIIYCLRNQEVKRALCCTLHLYQHQDPDPKKASRNV</sequence>